<dbReference type="EC" id="1.17.7.4" evidence="1"/>
<dbReference type="EMBL" id="BX251412">
    <property type="protein sequence ID" value="CAD67323.1"/>
    <property type="molecule type" value="Genomic_DNA"/>
</dbReference>
<dbReference type="SMR" id="Q83NB2"/>
<dbReference type="KEGG" id="tws:TW664"/>
<dbReference type="HOGENOM" id="CLU_027486_1_0_11"/>
<dbReference type="UniPathway" id="UPA00056">
    <property type="reaction ID" value="UER00097"/>
</dbReference>
<dbReference type="UniPathway" id="UPA00059">
    <property type="reaction ID" value="UER00105"/>
</dbReference>
<dbReference type="GO" id="GO:0051539">
    <property type="term" value="F:4 iron, 4 sulfur cluster binding"/>
    <property type="evidence" value="ECO:0007669"/>
    <property type="project" value="UniProtKB-UniRule"/>
</dbReference>
<dbReference type="GO" id="GO:0051745">
    <property type="term" value="F:4-hydroxy-3-methylbut-2-enyl diphosphate reductase activity"/>
    <property type="evidence" value="ECO:0007669"/>
    <property type="project" value="UniProtKB-UniRule"/>
</dbReference>
<dbReference type="GO" id="GO:0046872">
    <property type="term" value="F:metal ion binding"/>
    <property type="evidence" value="ECO:0007669"/>
    <property type="project" value="UniProtKB-KW"/>
</dbReference>
<dbReference type="GO" id="GO:0050992">
    <property type="term" value="P:dimethylallyl diphosphate biosynthetic process"/>
    <property type="evidence" value="ECO:0007669"/>
    <property type="project" value="UniProtKB-UniRule"/>
</dbReference>
<dbReference type="GO" id="GO:0019288">
    <property type="term" value="P:isopentenyl diphosphate biosynthetic process, methylerythritol 4-phosphate pathway"/>
    <property type="evidence" value="ECO:0007669"/>
    <property type="project" value="UniProtKB-UniRule"/>
</dbReference>
<dbReference type="GO" id="GO:0016114">
    <property type="term" value="P:terpenoid biosynthetic process"/>
    <property type="evidence" value="ECO:0007669"/>
    <property type="project" value="UniProtKB-UniRule"/>
</dbReference>
<dbReference type="CDD" id="cd13944">
    <property type="entry name" value="lytB_ispH"/>
    <property type="match status" value="1"/>
</dbReference>
<dbReference type="Gene3D" id="3.40.50.11270">
    <property type="match status" value="1"/>
</dbReference>
<dbReference type="Gene3D" id="3.40.1010.20">
    <property type="entry name" value="4-hydroxy-3-methylbut-2-enyl diphosphate reductase, catalytic domain"/>
    <property type="match status" value="2"/>
</dbReference>
<dbReference type="HAMAP" id="MF_00191">
    <property type="entry name" value="IspH"/>
    <property type="match status" value="1"/>
</dbReference>
<dbReference type="InterPro" id="IPR003451">
    <property type="entry name" value="LytB/IspH"/>
</dbReference>
<dbReference type="NCBIfam" id="TIGR00216">
    <property type="entry name" value="ispH_lytB"/>
    <property type="match status" value="1"/>
</dbReference>
<dbReference type="NCBIfam" id="NF002189">
    <property type="entry name" value="PRK01045.1-3"/>
    <property type="match status" value="1"/>
</dbReference>
<dbReference type="NCBIfam" id="NF002190">
    <property type="entry name" value="PRK01045.1-4"/>
    <property type="match status" value="1"/>
</dbReference>
<dbReference type="PANTHER" id="PTHR30426">
    <property type="entry name" value="4-HYDROXY-3-METHYLBUT-2-ENYL DIPHOSPHATE REDUCTASE"/>
    <property type="match status" value="1"/>
</dbReference>
<dbReference type="PANTHER" id="PTHR30426:SF0">
    <property type="entry name" value="4-HYDROXY-3-METHYLBUT-2-ENYL DIPHOSPHATE REDUCTASE"/>
    <property type="match status" value="1"/>
</dbReference>
<dbReference type="Pfam" id="PF02401">
    <property type="entry name" value="LYTB"/>
    <property type="match status" value="1"/>
</dbReference>
<protein>
    <recommendedName>
        <fullName evidence="1">4-hydroxy-3-methylbut-2-enyl diphosphate reductase</fullName>
        <shortName evidence="1">HMBPP reductase</shortName>
        <ecNumber evidence="1">1.17.7.4</ecNumber>
    </recommendedName>
</protein>
<organism>
    <name type="scientific">Tropheryma whipplei (strain TW08/27)</name>
    <name type="common">Whipple's bacillus</name>
    <dbReference type="NCBI Taxonomy" id="218496"/>
    <lineage>
        <taxon>Bacteria</taxon>
        <taxon>Bacillati</taxon>
        <taxon>Actinomycetota</taxon>
        <taxon>Actinomycetes</taxon>
        <taxon>Micrococcales</taxon>
        <taxon>Tropherymataceae</taxon>
        <taxon>Tropheryma</taxon>
    </lineage>
</organism>
<sequence>MAKRVLLASPRGYCAGVDRAVIAVEKALERHGPPVYVRKQIVHNVHVVGSLEKKGAIFVDQVDQIPPGAVTIFSAHGVSPAVVHSANERGLQVIDATCPLVTKVHREVIRFSKAGYFILLIGHSGHEEVEGTSGHAPDRVLVVNSPDEADTIDVPHTDKLVWLSQTTLSVDETLETVKRLRLRFPHIQDPPSDDICYATQNRQAAVKKIAPLSDLVIVVGSANSSNSVRLVEVALENGAKAAVRLDYADELDPALLDKVDVVGVTSGASVPEILVRDLLEVLARAGYTKVESVQTAVEDLVFSLPKGLRESRK</sequence>
<name>ISPH_TROW8</name>
<proteinExistence type="inferred from homology"/>
<accession>Q83NB2</accession>
<feature type="chain" id="PRO_0000128887" description="4-hydroxy-3-methylbut-2-enyl diphosphate reductase">
    <location>
        <begin position="1"/>
        <end position="313"/>
    </location>
</feature>
<feature type="active site" description="Proton donor" evidence="1">
    <location>
        <position position="128"/>
    </location>
</feature>
<feature type="binding site" evidence="1">
    <location>
        <position position="14"/>
    </location>
    <ligand>
        <name>[4Fe-4S] cluster</name>
        <dbReference type="ChEBI" id="CHEBI:49883"/>
    </ligand>
</feature>
<feature type="binding site" evidence="1">
    <location>
        <position position="43"/>
    </location>
    <ligand>
        <name>(2E)-4-hydroxy-3-methylbut-2-enyl diphosphate</name>
        <dbReference type="ChEBI" id="CHEBI:128753"/>
    </ligand>
</feature>
<feature type="binding site" evidence="1">
    <location>
        <position position="43"/>
    </location>
    <ligand>
        <name>dimethylallyl diphosphate</name>
        <dbReference type="ChEBI" id="CHEBI:57623"/>
    </ligand>
</feature>
<feature type="binding site" evidence="1">
    <location>
        <position position="43"/>
    </location>
    <ligand>
        <name>isopentenyl diphosphate</name>
        <dbReference type="ChEBI" id="CHEBI:128769"/>
    </ligand>
</feature>
<feature type="binding site" evidence="1">
    <location>
        <position position="76"/>
    </location>
    <ligand>
        <name>(2E)-4-hydroxy-3-methylbut-2-enyl diphosphate</name>
        <dbReference type="ChEBI" id="CHEBI:128753"/>
    </ligand>
</feature>
<feature type="binding site" evidence="1">
    <location>
        <position position="76"/>
    </location>
    <ligand>
        <name>dimethylallyl diphosphate</name>
        <dbReference type="ChEBI" id="CHEBI:57623"/>
    </ligand>
</feature>
<feature type="binding site" evidence="1">
    <location>
        <position position="76"/>
    </location>
    <ligand>
        <name>isopentenyl diphosphate</name>
        <dbReference type="ChEBI" id="CHEBI:128769"/>
    </ligand>
</feature>
<feature type="binding site" evidence="1">
    <location>
        <position position="98"/>
    </location>
    <ligand>
        <name>[4Fe-4S] cluster</name>
        <dbReference type="ChEBI" id="CHEBI:49883"/>
    </ligand>
</feature>
<feature type="binding site" evidence="1">
    <location>
        <position position="126"/>
    </location>
    <ligand>
        <name>(2E)-4-hydroxy-3-methylbut-2-enyl diphosphate</name>
        <dbReference type="ChEBI" id="CHEBI:128753"/>
    </ligand>
</feature>
<feature type="binding site" evidence="1">
    <location>
        <position position="126"/>
    </location>
    <ligand>
        <name>dimethylallyl diphosphate</name>
        <dbReference type="ChEBI" id="CHEBI:57623"/>
    </ligand>
</feature>
<feature type="binding site" evidence="1">
    <location>
        <position position="126"/>
    </location>
    <ligand>
        <name>isopentenyl diphosphate</name>
        <dbReference type="ChEBI" id="CHEBI:128769"/>
    </ligand>
</feature>
<feature type="binding site" evidence="1">
    <location>
        <position position="166"/>
    </location>
    <ligand>
        <name>(2E)-4-hydroxy-3-methylbut-2-enyl diphosphate</name>
        <dbReference type="ChEBI" id="CHEBI:128753"/>
    </ligand>
</feature>
<feature type="binding site" evidence="1">
    <location>
        <position position="196"/>
    </location>
    <ligand>
        <name>[4Fe-4S] cluster</name>
        <dbReference type="ChEBI" id="CHEBI:49883"/>
    </ligand>
</feature>
<feature type="binding site" evidence="1">
    <location>
        <position position="224"/>
    </location>
    <ligand>
        <name>(2E)-4-hydroxy-3-methylbut-2-enyl diphosphate</name>
        <dbReference type="ChEBI" id="CHEBI:128753"/>
    </ligand>
</feature>
<feature type="binding site" evidence="1">
    <location>
        <position position="224"/>
    </location>
    <ligand>
        <name>dimethylallyl diphosphate</name>
        <dbReference type="ChEBI" id="CHEBI:57623"/>
    </ligand>
</feature>
<feature type="binding site" evidence="1">
    <location>
        <position position="224"/>
    </location>
    <ligand>
        <name>isopentenyl diphosphate</name>
        <dbReference type="ChEBI" id="CHEBI:128769"/>
    </ligand>
</feature>
<feature type="binding site" evidence="1">
    <location>
        <position position="225"/>
    </location>
    <ligand>
        <name>(2E)-4-hydroxy-3-methylbut-2-enyl diphosphate</name>
        <dbReference type="ChEBI" id="CHEBI:128753"/>
    </ligand>
</feature>
<feature type="binding site" evidence="1">
    <location>
        <position position="225"/>
    </location>
    <ligand>
        <name>dimethylallyl diphosphate</name>
        <dbReference type="ChEBI" id="CHEBI:57623"/>
    </ligand>
</feature>
<feature type="binding site" evidence="1">
    <location>
        <position position="225"/>
    </location>
    <ligand>
        <name>isopentenyl diphosphate</name>
        <dbReference type="ChEBI" id="CHEBI:128769"/>
    </ligand>
</feature>
<feature type="binding site" evidence="1">
    <location>
        <position position="226"/>
    </location>
    <ligand>
        <name>(2E)-4-hydroxy-3-methylbut-2-enyl diphosphate</name>
        <dbReference type="ChEBI" id="CHEBI:128753"/>
    </ligand>
</feature>
<feature type="binding site" evidence="1">
    <location>
        <position position="226"/>
    </location>
    <ligand>
        <name>dimethylallyl diphosphate</name>
        <dbReference type="ChEBI" id="CHEBI:57623"/>
    </ligand>
</feature>
<feature type="binding site" evidence="1">
    <location>
        <position position="226"/>
    </location>
    <ligand>
        <name>isopentenyl diphosphate</name>
        <dbReference type="ChEBI" id="CHEBI:128769"/>
    </ligand>
</feature>
<feature type="binding site" evidence="1">
    <location>
        <position position="269"/>
    </location>
    <ligand>
        <name>(2E)-4-hydroxy-3-methylbut-2-enyl diphosphate</name>
        <dbReference type="ChEBI" id="CHEBI:128753"/>
    </ligand>
</feature>
<feature type="binding site" evidence="1">
    <location>
        <position position="269"/>
    </location>
    <ligand>
        <name>dimethylallyl diphosphate</name>
        <dbReference type="ChEBI" id="CHEBI:57623"/>
    </ligand>
</feature>
<feature type="binding site" evidence="1">
    <location>
        <position position="269"/>
    </location>
    <ligand>
        <name>isopentenyl diphosphate</name>
        <dbReference type="ChEBI" id="CHEBI:128769"/>
    </ligand>
</feature>
<keyword id="KW-0004">4Fe-4S</keyword>
<keyword id="KW-0408">Iron</keyword>
<keyword id="KW-0411">Iron-sulfur</keyword>
<keyword id="KW-0414">Isoprene biosynthesis</keyword>
<keyword id="KW-0479">Metal-binding</keyword>
<keyword id="KW-0560">Oxidoreductase</keyword>
<comment type="function">
    <text evidence="1">Catalyzes the conversion of 1-hydroxy-2-methyl-2-(E)-butenyl 4-diphosphate (HMBPP) into a mixture of isopentenyl diphosphate (IPP) and dimethylallyl diphosphate (DMAPP). Acts in the terminal step of the DOXP/MEP pathway for isoprenoid precursor biosynthesis.</text>
</comment>
<comment type="catalytic activity">
    <reaction evidence="1">
        <text>isopentenyl diphosphate + 2 oxidized [2Fe-2S]-[ferredoxin] + H2O = (2E)-4-hydroxy-3-methylbut-2-enyl diphosphate + 2 reduced [2Fe-2S]-[ferredoxin] + 2 H(+)</text>
        <dbReference type="Rhea" id="RHEA:24488"/>
        <dbReference type="Rhea" id="RHEA-COMP:10000"/>
        <dbReference type="Rhea" id="RHEA-COMP:10001"/>
        <dbReference type="ChEBI" id="CHEBI:15377"/>
        <dbReference type="ChEBI" id="CHEBI:15378"/>
        <dbReference type="ChEBI" id="CHEBI:33737"/>
        <dbReference type="ChEBI" id="CHEBI:33738"/>
        <dbReference type="ChEBI" id="CHEBI:128753"/>
        <dbReference type="ChEBI" id="CHEBI:128769"/>
        <dbReference type="EC" id="1.17.7.4"/>
    </reaction>
</comment>
<comment type="catalytic activity">
    <reaction evidence="1">
        <text>dimethylallyl diphosphate + 2 oxidized [2Fe-2S]-[ferredoxin] + H2O = (2E)-4-hydroxy-3-methylbut-2-enyl diphosphate + 2 reduced [2Fe-2S]-[ferredoxin] + 2 H(+)</text>
        <dbReference type="Rhea" id="RHEA:24825"/>
        <dbReference type="Rhea" id="RHEA-COMP:10000"/>
        <dbReference type="Rhea" id="RHEA-COMP:10001"/>
        <dbReference type="ChEBI" id="CHEBI:15377"/>
        <dbReference type="ChEBI" id="CHEBI:15378"/>
        <dbReference type="ChEBI" id="CHEBI:33737"/>
        <dbReference type="ChEBI" id="CHEBI:33738"/>
        <dbReference type="ChEBI" id="CHEBI:57623"/>
        <dbReference type="ChEBI" id="CHEBI:128753"/>
        <dbReference type="EC" id="1.17.7.4"/>
    </reaction>
</comment>
<comment type="cofactor">
    <cofactor evidence="1">
        <name>[4Fe-4S] cluster</name>
        <dbReference type="ChEBI" id="CHEBI:49883"/>
    </cofactor>
    <text evidence="1">Binds 1 [4Fe-4S] cluster per subunit.</text>
</comment>
<comment type="pathway">
    <text evidence="1">Isoprenoid biosynthesis; dimethylallyl diphosphate biosynthesis; dimethylallyl diphosphate from (2E)-4-hydroxy-3-methylbutenyl diphosphate: step 1/1.</text>
</comment>
<comment type="pathway">
    <text evidence="1">Isoprenoid biosynthesis; isopentenyl diphosphate biosynthesis via DXP pathway; isopentenyl diphosphate from 1-deoxy-D-xylulose 5-phosphate: step 6/6.</text>
</comment>
<comment type="similarity">
    <text evidence="1">Belongs to the IspH family.</text>
</comment>
<gene>
    <name evidence="1" type="primary">ispH</name>
    <name type="ordered locus">TW664</name>
</gene>
<evidence type="ECO:0000255" key="1">
    <source>
        <dbReference type="HAMAP-Rule" id="MF_00191"/>
    </source>
</evidence>
<reference key="1">
    <citation type="journal article" date="2003" name="Lancet">
        <title>Sequencing and analysis of the genome of the Whipple's disease bacterium Tropheryma whipplei.</title>
        <authorList>
            <person name="Bentley S.D."/>
            <person name="Maiwald M."/>
            <person name="Murphy L.D."/>
            <person name="Pallen M.J."/>
            <person name="Yeats C.A."/>
            <person name="Dover L.G."/>
            <person name="Norbertczak H.T."/>
            <person name="Besra G.S."/>
            <person name="Quail M.A."/>
            <person name="Harris D.E."/>
            <person name="von Herbay A."/>
            <person name="Goble A."/>
            <person name="Rutter S."/>
            <person name="Squares R."/>
            <person name="Squares S."/>
            <person name="Barrell B.G."/>
            <person name="Parkhill J."/>
            <person name="Relman D.A."/>
        </authorList>
    </citation>
    <scope>NUCLEOTIDE SEQUENCE [LARGE SCALE GENOMIC DNA]</scope>
    <source>
        <strain>TW08/27</strain>
    </source>
</reference>